<protein>
    <recommendedName>
        <fullName evidence="1">tRNA(Ile)-lysidine synthase</fullName>
        <ecNumber evidence="1">6.3.4.19</ecNumber>
    </recommendedName>
    <alternativeName>
        <fullName evidence="1">tRNA(Ile)-2-lysyl-cytidine synthase</fullName>
    </alternativeName>
    <alternativeName>
        <fullName evidence="1">tRNA(Ile)-lysidine synthetase</fullName>
    </alternativeName>
</protein>
<comment type="function">
    <text evidence="1">Ligates lysine onto the cytidine present at position 34 of the AUA codon-specific tRNA(Ile) that contains the anticodon CAU, in an ATP-dependent manner. Cytidine is converted to lysidine, thus changing the amino acid specificity of the tRNA from methionine to isoleucine.</text>
</comment>
<comment type="catalytic activity">
    <reaction evidence="1">
        <text>cytidine(34) in tRNA(Ile2) + L-lysine + ATP = lysidine(34) in tRNA(Ile2) + AMP + diphosphate + H(+)</text>
        <dbReference type="Rhea" id="RHEA:43744"/>
        <dbReference type="Rhea" id="RHEA-COMP:10625"/>
        <dbReference type="Rhea" id="RHEA-COMP:10670"/>
        <dbReference type="ChEBI" id="CHEBI:15378"/>
        <dbReference type="ChEBI" id="CHEBI:30616"/>
        <dbReference type="ChEBI" id="CHEBI:32551"/>
        <dbReference type="ChEBI" id="CHEBI:33019"/>
        <dbReference type="ChEBI" id="CHEBI:82748"/>
        <dbReference type="ChEBI" id="CHEBI:83665"/>
        <dbReference type="ChEBI" id="CHEBI:456215"/>
        <dbReference type="EC" id="6.3.4.19"/>
    </reaction>
</comment>
<comment type="subcellular location">
    <subcellularLocation>
        <location evidence="1">Cytoplasm</location>
    </subcellularLocation>
</comment>
<comment type="domain">
    <text>The N-terminal region contains the highly conserved SGGXDS motif, predicted to be a P-loop motif involved in ATP binding.</text>
</comment>
<comment type="similarity">
    <text evidence="1">Belongs to the tRNA(Ile)-lysidine synthase family.</text>
</comment>
<feature type="chain" id="PRO_0000181693" description="tRNA(Ile)-lysidine synthase">
    <location>
        <begin position="1"/>
        <end position="440"/>
    </location>
</feature>
<feature type="binding site" evidence="1">
    <location>
        <begin position="29"/>
        <end position="34"/>
    </location>
    <ligand>
        <name>ATP</name>
        <dbReference type="ChEBI" id="CHEBI:30616"/>
    </ligand>
</feature>
<evidence type="ECO:0000255" key="1">
    <source>
        <dbReference type="HAMAP-Rule" id="MF_01161"/>
    </source>
</evidence>
<gene>
    <name evidence="1" type="primary">tilS</name>
    <name type="ordered locus">ECA1049</name>
</gene>
<accession>Q6D8C5</accession>
<dbReference type="EC" id="6.3.4.19" evidence="1"/>
<dbReference type="EMBL" id="BX950851">
    <property type="protein sequence ID" value="CAG73960.1"/>
    <property type="molecule type" value="Genomic_DNA"/>
</dbReference>
<dbReference type="SMR" id="Q6D8C5"/>
<dbReference type="STRING" id="218491.ECA1049"/>
<dbReference type="KEGG" id="eca:ECA1049"/>
<dbReference type="eggNOG" id="COG0037">
    <property type="taxonomic scope" value="Bacteria"/>
</dbReference>
<dbReference type="HOGENOM" id="CLU_018869_2_0_6"/>
<dbReference type="Proteomes" id="UP000007966">
    <property type="component" value="Chromosome"/>
</dbReference>
<dbReference type="GO" id="GO:0005737">
    <property type="term" value="C:cytoplasm"/>
    <property type="evidence" value="ECO:0007669"/>
    <property type="project" value="UniProtKB-SubCell"/>
</dbReference>
<dbReference type="GO" id="GO:0005524">
    <property type="term" value="F:ATP binding"/>
    <property type="evidence" value="ECO:0007669"/>
    <property type="project" value="UniProtKB-UniRule"/>
</dbReference>
<dbReference type="GO" id="GO:0032267">
    <property type="term" value="F:tRNA(Ile)-lysidine synthase activity"/>
    <property type="evidence" value="ECO:0007669"/>
    <property type="project" value="UniProtKB-EC"/>
</dbReference>
<dbReference type="GO" id="GO:0006400">
    <property type="term" value="P:tRNA modification"/>
    <property type="evidence" value="ECO:0007669"/>
    <property type="project" value="UniProtKB-UniRule"/>
</dbReference>
<dbReference type="CDD" id="cd01992">
    <property type="entry name" value="TilS_N"/>
    <property type="match status" value="1"/>
</dbReference>
<dbReference type="Gene3D" id="1.20.59.20">
    <property type="match status" value="1"/>
</dbReference>
<dbReference type="Gene3D" id="3.40.50.620">
    <property type="entry name" value="HUPs"/>
    <property type="match status" value="1"/>
</dbReference>
<dbReference type="HAMAP" id="MF_01161">
    <property type="entry name" value="tRNA_Ile_lys_synt"/>
    <property type="match status" value="1"/>
</dbReference>
<dbReference type="InterPro" id="IPR012796">
    <property type="entry name" value="Lysidine-tRNA-synth_C"/>
</dbReference>
<dbReference type="InterPro" id="IPR014729">
    <property type="entry name" value="Rossmann-like_a/b/a_fold"/>
</dbReference>
<dbReference type="InterPro" id="IPR011063">
    <property type="entry name" value="TilS/TtcA_N"/>
</dbReference>
<dbReference type="InterPro" id="IPR012094">
    <property type="entry name" value="tRNA_Ile_lys_synt"/>
</dbReference>
<dbReference type="InterPro" id="IPR012795">
    <property type="entry name" value="tRNA_Ile_lys_synt_N"/>
</dbReference>
<dbReference type="InterPro" id="IPR015262">
    <property type="entry name" value="tRNA_Ile_lys_synt_subst-bd"/>
</dbReference>
<dbReference type="NCBIfam" id="TIGR02433">
    <property type="entry name" value="lysidine_TilS_C"/>
    <property type="match status" value="1"/>
</dbReference>
<dbReference type="NCBIfam" id="TIGR02432">
    <property type="entry name" value="lysidine_TilS_N"/>
    <property type="match status" value="1"/>
</dbReference>
<dbReference type="NCBIfam" id="NF007942">
    <property type="entry name" value="PRK10660.1"/>
    <property type="match status" value="1"/>
</dbReference>
<dbReference type="PANTHER" id="PTHR43033">
    <property type="entry name" value="TRNA(ILE)-LYSIDINE SYNTHASE-RELATED"/>
    <property type="match status" value="1"/>
</dbReference>
<dbReference type="PANTHER" id="PTHR43033:SF1">
    <property type="entry name" value="TRNA(ILE)-LYSIDINE SYNTHASE-RELATED"/>
    <property type="match status" value="1"/>
</dbReference>
<dbReference type="Pfam" id="PF01171">
    <property type="entry name" value="ATP_bind_3"/>
    <property type="match status" value="1"/>
</dbReference>
<dbReference type="Pfam" id="PF09179">
    <property type="entry name" value="TilS"/>
    <property type="match status" value="1"/>
</dbReference>
<dbReference type="Pfam" id="PF11734">
    <property type="entry name" value="TilS_C"/>
    <property type="match status" value="1"/>
</dbReference>
<dbReference type="SMART" id="SM00977">
    <property type="entry name" value="TilS_C"/>
    <property type="match status" value="1"/>
</dbReference>
<dbReference type="SUPFAM" id="SSF52402">
    <property type="entry name" value="Adenine nucleotide alpha hydrolases-like"/>
    <property type="match status" value="1"/>
</dbReference>
<dbReference type="SUPFAM" id="SSF82829">
    <property type="entry name" value="MesJ substrate recognition domain-like"/>
    <property type="match status" value="1"/>
</dbReference>
<dbReference type="SUPFAM" id="SSF56037">
    <property type="entry name" value="PheT/TilS domain"/>
    <property type="match status" value="1"/>
</dbReference>
<sequence length="440" mass="50029">MDRTEPDDELLQTIVTQTAGCGSILLAYSGGLDSSVLLHLLVTVRQRSGQTIRAAYIHHGLNPLADSWAEHCRQQCERWQVPFSSLAVTVEAQNGGIEAAARTARYQALQVHLKEGETLLTAQHLDDQSETFLLALKRGSGPAGLSAMAANSFLGHHRLVRPLLGFSRLQLEAYAQRHQLRWIEDDSNQDERFDRNFLRRQILPRLTQRWPHFPSAVARSAELCAEQEQLLDELLEESLRTLRQPDGALSIDGLVPLSPVRRFALLRRWLAQQGATMPARDQLQRLWDEVAASRRDAEPILQLNQMQIRRFRQHLYLLPLMPSLKDRVLPWQPTSCPLSLPDNLGTLLLADSGVAVRAPKNGETVSIRFSTSGTVHIVGRAHGRQIKKLWQELGVPPWWRDRTPLLFYNEQLIAAVGRFVTREGQVREHQPLWHIVWERN</sequence>
<name>TILS_PECAS</name>
<reference key="1">
    <citation type="journal article" date="2004" name="Proc. Natl. Acad. Sci. U.S.A.">
        <title>Genome sequence of the enterobacterial phytopathogen Erwinia carotovora subsp. atroseptica and characterization of virulence factors.</title>
        <authorList>
            <person name="Bell K.S."/>
            <person name="Sebaihia M."/>
            <person name="Pritchard L."/>
            <person name="Holden M.T.G."/>
            <person name="Hyman L.J."/>
            <person name="Holeva M.C."/>
            <person name="Thomson N.R."/>
            <person name="Bentley S.D."/>
            <person name="Churcher L.J.C."/>
            <person name="Mungall K."/>
            <person name="Atkin R."/>
            <person name="Bason N."/>
            <person name="Brooks K."/>
            <person name="Chillingworth T."/>
            <person name="Clark K."/>
            <person name="Doggett J."/>
            <person name="Fraser A."/>
            <person name="Hance Z."/>
            <person name="Hauser H."/>
            <person name="Jagels K."/>
            <person name="Moule S."/>
            <person name="Norbertczak H."/>
            <person name="Ormond D."/>
            <person name="Price C."/>
            <person name="Quail M.A."/>
            <person name="Sanders M."/>
            <person name="Walker D."/>
            <person name="Whitehead S."/>
            <person name="Salmond G.P.C."/>
            <person name="Birch P.R.J."/>
            <person name="Parkhill J."/>
            <person name="Toth I.K."/>
        </authorList>
    </citation>
    <scope>NUCLEOTIDE SEQUENCE [LARGE SCALE GENOMIC DNA]</scope>
    <source>
        <strain>SCRI 1043 / ATCC BAA-672</strain>
    </source>
</reference>
<organism>
    <name type="scientific">Pectobacterium atrosepticum (strain SCRI 1043 / ATCC BAA-672)</name>
    <name type="common">Erwinia carotovora subsp. atroseptica</name>
    <dbReference type="NCBI Taxonomy" id="218491"/>
    <lineage>
        <taxon>Bacteria</taxon>
        <taxon>Pseudomonadati</taxon>
        <taxon>Pseudomonadota</taxon>
        <taxon>Gammaproteobacteria</taxon>
        <taxon>Enterobacterales</taxon>
        <taxon>Pectobacteriaceae</taxon>
        <taxon>Pectobacterium</taxon>
    </lineage>
</organism>
<keyword id="KW-0067">ATP-binding</keyword>
<keyword id="KW-0963">Cytoplasm</keyword>
<keyword id="KW-0436">Ligase</keyword>
<keyword id="KW-0547">Nucleotide-binding</keyword>
<keyword id="KW-1185">Reference proteome</keyword>
<keyword id="KW-0819">tRNA processing</keyword>
<proteinExistence type="inferred from homology"/>